<accession>Q2SS69</accession>
<evidence type="ECO:0000255" key="1">
    <source>
        <dbReference type="HAMAP-Rule" id="MF_01235"/>
    </source>
</evidence>
<reference key="1">
    <citation type="submission" date="2005-09" db="EMBL/GenBank/DDBJ databases">
        <authorList>
            <person name="Glass J.I."/>
            <person name="Lartigue C."/>
            <person name="Pfannkoch C."/>
            <person name="Baden-Tillson H."/>
            <person name="Smith H.O."/>
            <person name="Venter J.C."/>
            <person name="Roske K."/>
            <person name="Wise K.S."/>
            <person name="Calcutt M.J."/>
            <person name="Nelson W.C."/>
            <person name="Nierman W.C."/>
        </authorList>
    </citation>
    <scope>NUCLEOTIDE SEQUENCE [LARGE SCALE GENOMIC DNA]</scope>
    <source>
        <strain>California kid / ATCC 27343 / NCTC 10154</strain>
    </source>
</reference>
<name>NANE_MYCCT</name>
<gene>
    <name evidence="1" type="primary">nanE</name>
    <name type="ordered locus">MCAP_0419</name>
</gene>
<organism>
    <name type="scientific">Mycoplasma capricolum subsp. capricolum (strain California kid / ATCC 27343 / NCTC 10154)</name>
    <dbReference type="NCBI Taxonomy" id="340047"/>
    <lineage>
        <taxon>Bacteria</taxon>
        <taxon>Bacillati</taxon>
        <taxon>Mycoplasmatota</taxon>
        <taxon>Mollicutes</taxon>
        <taxon>Mycoplasmataceae</taxon>
        <taxon>Mycoplasma</taxon>
    </lineage>
</organism>
<sequence>MDLINQIKNTLIVSCQAIGDEPLNDSYVLSKMAYALVLGGSKVLRLSQVEHIKAVKQVVDVPIIGLIKKHYDNSEVFITPTIKEVDQLVDLKVDIIALDATLRTRPDQDLTNLVKTIKTKYPNQLLLADCSSVEDAINAQNLGFDLIASTLRGSTKQTKGHNNLENNYQFLRDLKKVITKPIIAEGGIWTPQQAKEILNLGIHSVVVGTAITRLHSIVKYWNDILK</sequence>
<dbReference type="EC" id="5.1.3.9" evidence="1"/>
<dbReference type="EMBL" id="CP000123">
    <property type="protein sequence ID" value="ABC01577.1"/>
    <property type="molecule type" value="Genomic_DNA"/>
</dbReference>
<dbReference type="RefSeq" id="WP_011387294.1">
    <property type="nucleotide sequence ID" value="NC_007633.1"/>
</dbReference>
<dbReference type="SMR" id="Q2SS69"/>
<dbReference type="GeneID" id="23778625"/>
<dbReference type="KEGG" id="mcp:MCAP_0419"/>
<dbReference type="HOGENOM" id="CLU_086300_1_0_14"/>
<dbReference type="PhylomeDB" id="Q2SS69"/>
<dbReference type="UniPathway" id="UPA00629">
    <property type="reaction ID" value="UER00682"/>
</dbReference>
<dbReference type="Proteomes" id="UP000001928">
    <property type="component" value="Chromosome"/>
</dbReference>
<dbReference type="GO" id="GO:0005829">
    <property type="term" value="C:cytosol"/>
    <property type="evidence" value="ECO:0007669"/>
    <property type="project" value="TreeGrafter"/>
</dbReference>
<dbReference type="GO" id="GO:0047465">
    <property type="term" value="F:N-acylglucosamine-6-phosphate 2-epimerase activity"/>
    <property type="evidence" value="ECO:0007669"/>
    <property type="project" value="UniProtKB-EC"/>
</dbReference>
<dbReference type="GO" id="GO:0005975">
    <property type="term" value="P:carbohydrate metabolic process"/>
    <property type="evidence" value="ECO:0007669"/>
    <property type="project" value="UniProtKB-UniRule"/>
</dbReference>
<dbReference type="GO" id="GO:0006053">
    <property type="term" value="P:N-acetylmannosamine catabolic process"/>
    <property type="evidence" value="ECO:0007669"/>
    <property type="project" value="TreeGrafter"/>
</dbReference>
<dbReference type="GO" id="GO:0019262">
    <property type="term" value="P:N-acetylneuraminate catabolic process"/>
    <property type="evidence" value="ECO:0007669"/>
    <property type="project" value="UniProtKB-UniRule"/>
</dbReference>
<dbReference type="CDD" id="cd04729">
    <property type="entry name" value="NanE"/>
    <property type="match status" value="1"/>
</dbReference>
<dbReference type="Gene3D" id="3.20.20.70">
    <property type="entry name" value="Aldolase class I"/>
    <property type="match status" value="1"/>
</dbReference>
<dbReference type="HAMAP" id="MF_01235">
    <property type="entry name" value="ManNAc6P_epimer"/>
    <property type="match status" value="1"/>
</dbReference>
<dbReference type="InterPro" id="IPR013785">
    <property type="entry name" value="Aldolase_TIM"/>
</dbReference>
<dbReference type="InterPro" id="IPR007260">
    <property type="entry name" value="NanE"/>
</dbReference>
<dbReference type="InterPro" id="IPR011060">
    <property type="entry name" value="RibuloseP-bd_barrel"/>
</dbReference>
<dbReference type="NCBIfam" id="NF002231">
    <property type="entry name" value="PRK01130.1"/>
    <property type="match status" value="1"/>
</dbReference>
<dbReference type="PANTHER" id="PTHR36204">
    <property type="entry name" value="N-ACETYLMANNOSAMINE-6-PHOSPHATE 2-EPIMERASE-RELATED"/>
    <property type="match status" value="1"/>
</dbReference>
<dbReference type="PANTHER" id="PTHR36204:SF1">
    <property type="entry name" value="N-ACETYLMANNOSAMINE-6-PHOSPHATE 2-EPIMERASE-RELATED"/>
    <property type="match status" value="1"/>
</dbReference>
<dbReference type="Pfam" id="PF04131">
    <property type="entry name" value="NanE"/>
    <property type="match status" value="1"/>
</dbReference>
<dbReference type="SUPFAM" id="SSF51366">
    <property type="entry name" value="Ribulose-phoshate binding barrel"/>
    <property type="match status" value="1"/>
</dbReference>
<protein>
    <recommendedName>
        <fullName evidence="1">Putative N-acetylmannosamine-6-phosphate 2-epimerase</fullName>
        <ecNumber evidence="1">5.1.3.9</ecNumber>
    </recommendedName>
    <alternativeName>
        <fullName evidence="1">ManNAc-6-P epimerase</fullName>
    </alternativeName>
</protein>
<comment type="function">
    <text evidence="1">Converts N-acetylmannosamine-6-phosphate (ManNAc-6-P) to N-acetylglucosamine-6-phosphate (GlcNAc-6-P).</text>
</comment>
<comment type="catalytic activity">
    <reaction evidence="1">
        <text>an N-acyl-D-glucosamine 6-phosphate = an N-acyl-D-mannosamine 6-phosphate</text>
        <dbReference type="Rhea" id="RHEA:23932"/>
        <dbReference type="ChEBI" id="CHEBI:57599"/>
        <dbReference type="ChEBI" id="CHEBI:57666"/>
        <dbReference type="EC" id="5.1.3.9"/>
    </reaction>
</comment>
<comment type="pathway">
    <text evidence="1">Amino-sugar metabolism; N-acetylneuraminate degradation; D-fructose 6-phosphate from N-acetylneuraminate: step 3/5.</text>
</comment>
<comment type="similarity">
    <text evidence="1">Belongs to the NanE family.</text>
</comment>
<feature type="chain" id="PRO_0000301478" description="Putative N-acetylmannosamine-6-phosphate 2-epimerase">
    <location>
        <begin position="1"/>
        <end position="226"/>
    </location>
</feature>
<keyword id="KW-0119">Carbohydrate metabolism</keyword>
<keyword id="KW-0413">Isomerase</keyword>
<proteinExistence type="inferred from homology"/>